<accession>Q76I89</accession>
<accession>Q5ZLT8</accession>
<comment type="function">
    <text evidence="1 4">Acts as a component of the essential kinetochore-associated NDC80 complex, which is required for chromosome segregation and spindle checkpoint activity (PubMed:12829748). Required for kinetochore integrity and the organization of stable microtubule binding sites in the outer plate of the kinetochore. The NDC80 complex synergistically enhances the affinity of the SKA1 complex for microtubules and may allow the NDC80 complex to track depolymerizing microtubules. May play a role in chromosome congression and may be essential for the end-on attachment of the kinetochores to spindle microtubules (By similarity).</text>
</comment>
<comment type="subunit">
    <text evidence="4 5">Component of the NDC80 complex, which is composed of at least NDC80/HEC1 and CDCA1. Interacts with CENPH.</text>
</comment>
<comment type="interaction">
    <interactant intactId="EBI-1003779">
        <id>Q76I89</id>
    </interactant>
    <interactant intactId="EBI-1003677">
        <id>Q90ZF9</id>
        <label>CENPH</label>
    </interactant>
    <organismsDiffer>false</organismsDiffer>
    <experiments>5</experiments>
</comment>
<comment type="interaction">
    <interactant intactId="EBI-1003779">
        <id>Q76I89</id>
    </interactant>
    <interactant intactId="EBI-1003866">
        <id>Q76I90</id>
        <label>NUF2</label>
    </interactant>
    <organismsDiffer>false</organismsDiffer>
    <experiments>3</experiments>
</comment>
<comment type="subcellular location">
    <subcellularLocation>
        <location evidence="1">Nucleus</location>
    </subcellularLocation>
    <subcellularLocation>
        <location evidence="1">Chromosome</location>
        <location evidence="1">Centromere</location>
        <location evidence="1">Kinetochore</location>
    </subcellularLocation>
    <text evidence="1">Localizes to kinetochores from late prophase to anaphase. Localizes specifically to the outer plate of the kinetochore.</text>
</comment>
<comment type="similarity">
    <text evidence="6">Belongs to the NDC80/HEC1 family.</text>
</comment>
<name>NDC80_CHICK</name>
<protein>
    <recommendedName>
        <fullName>Kinetochore protein NDC80 homolog</fullName>
    </recommendedName>
    <alternativeName>
        <fullName>Kinetochore protein Hec1</fullName>
    </alternativeName>
    <alternativeName>
        <fullName>Kinetochore-associated protein 2</fullName>
    </alternativeName>
</protein>
<keyword id="KW-0131">Cell cycle</keyword>
<keyword id="KW-0132">Cell division</keyword>
<keyword id="KW-0137">Centromere</keyword>
<keyword id="KW-0158">Chromosome</keyword>
<keyword id="KW-0175">Coiled coil</keyword>
<keyword id="KW-0995">Kinetochore</keyword>
<keyword id="KW-0498">Mitosis</keyword>
<keyword id="KW-0539">Nucleus</keyword>
<keyword id="KW-1185">Reference proteome</keyword>
<feature type="chain" id="PRO_0000249553" description="Kinetochore protein NDC80 homolog">
    <location>
        <begin position="1"/>
        <end position="640"/>
    </location>
</feature>
<feature type="region of interest" description="Disordered" evidence="3">
    <location>
        <begin position="1"/>
        <end position="47"/>
    </location>
</feature>
<feature type="coiled-coil region" evidence="2">
    <location>
        <begin position="265"/>
        <end position="427"/>
    </location>
</feature>
<feature type="coiled-coil region" evidence="2">
    <location>
        <begin position="464"/>
        <end position="573"/>
    </location>
</feature>
<feature type="compositionally biased region" description="Low complexity" evidence="3">
    <location>
        <begin position="1"/>
        <end position="16"/>
    </location>
</feature>
<feature type="compositionally biased region" description="Polar residues" evidence="3">
    <location>
        <begin position="22"/>
        <end position="33"/>
    </location>
</feature>
<feature type="sequence conflict" description="In Ref. 2; CAG31305." evidence="6" ref="2">
    <original>A</original>
    <variation>T</variation>
    <location>
        <position position="93"/>
    </location>
</feature>
<feature type="sequence conflict" description="In Ref. 2; CAG31305." evidence="6" ref="2">
    <original>D</original>
    <variation>N</variation>
    <location>
        <position position="487"/>
    </location>
</feature>
<organism>
    <name type="scientific">Gallus gallus</name>
    <name type="common">Chicken</name>
    <dbReference type="NCBI Taxonomy" id="9031"/>
    <lineage>
        <taxon>Eukaryota</taxon>
        <taxon>Metazoa</taxon>
        <taxon>Chordata</taxon>
        <taxon>Craniata</taxon>
        <taxon>Vertebrata</taxon>
        <taxon>Euteleostomi</taxon>
        <taxon>Archelosauria</taxon>
        <taxon>Archosauria</taxon>
        <taxon>Dinosauria</taxon>
        <taxon>Saurischia</taxon>
        <taxon>Theropoda</taxon>
        <taxon>Coelurosauria</taxon>
        <taxon>Aves</taxon>
        <taxon>Neognathae</taxon>
        <taxon>Galloanserae</taxon>
        <taxon>Galliformes</taxon>
        <taxon>Phasianidae</taxon>
        <taxon>Phasianinae</taxon>
        <taxon>Gallus</taxon>
    </lineage>
</organism>
<dbReference type="EMBL" id="AB098622">
    <property type="protein sequence ID" value="BAC81642.1"/>
    <property type="molecule type" value="mRNA"/>
</dbReference>
<dbReference type="EMBL" id="AJ719646">
    <property type="protein sequence ID" value="CAG31305.1"/>
    <property type="molecule type" value="mRNA"/>
</dbReference>
<dbReference type="RefSeq" id="NP_989808.3">
    <property type="nucleotide sequence ID" value="NM_204477.3"/>
</dbReference>
<dbReference type="RefSeq" id="XP_015133419.1">
    <property type="nucleotide sequence ID" value="XM_015277933.4"/>
</dbReference>
<dbReference type="RefSeq" id="XP_025002780.1">
    <property type="nucleotide sequence ID" value="XM_025147012.3"/>
</dbReference>
<dbReference type="RefSeq" id="XP_046766224.1">
    <property type="nucleotide sequence ID" value="XM_046910268.1"/>
</dbReference>
<dbReference type="RefSeq" id="XP_046766225.1">
    <property type="nucleotide sequence ID" value="XM_046910269.1"/>
</dbReference>
<dbReference type="SMR" id="Q76I89"/>
<dbReference type="BioGRID" id="675431">
    <property type="interactions" value="2"/>
</dbReference>
<dbReference type="FunCoup" id="Q76I89">
    <property type="interactions" value="1782"/>
</dbReference>
<dbReference type="IntAct" id="Q76I89">
    <property type="interactions" value="2"/>
</dbReference>
<dbReference type="STRING" id="9031.ENSGALP00000023851"/>
<dbReference type="PaxDb" id="9031-ENSGALP00000023851"/>
<dbReference type="Ensembl" id="ENSGALT00010003372.1">
    <property type="protein sequence ID" value="ENSGALP00010001815.1"/>
    <property type="gene ID" value="ENSGALG00010001457.1"/>
</dbReference>
<dbReference type="GeneID" id="395134"/>
<dbReference type="KEGG" id="gga:395134"/>
<dbReference type="CTD" id="10403"/>
<dbReference type="VEuPathDB" id="HostDB:geneid_395134"/>
<dbReference type="eggNOG" id="KOG0995">
    <property type="taxonomic scope" value="Eukaryota"/>
</dbReference>
<dbReference type="GeneTree" id="ENSGT00390000018386"/>
<dbReference type="HOGENOM" id="CLU_012583_2_0_1"/>
<dbReference type="InParanoid" id="Q76I89"/>
<dbReference type="OMA" id="PSHKFQK"/>
<dbReference type="OrthoDB" id="7459479at2759"/>
<dbReference type="PhylomeDB" id="Q76I89"/>
<dbReference type="TreeFam" id="TF101177"/>
<dbReference type="Reactome" id="R-GGA-141444">
    <property type="pathway name" value="Amplification of signal from unattached kinetochores via a MAD2 inhibitory signal"/>
</dbReference>
<dbReference type="Reactome" id="R-GGA-2467813">
    <property type="pathway name" value="Separation of Sister Chromatids"/>
</dbReference>
<dbReference type="Reactome" id="R-GGA-2500257">
    <property type="pathway name" value="Resolution of Sister Chromatid Cohesion"/>
</dbReference>
<dbReference type="Reactome" id="R-GGA-5663220">
    <property type="pathway name" value="RHO GTPases Activate Formins"/>
</dbReference>
<dbReference type="Reactome" id="R-GGA-9648025">
    <property type="pathway name" value="EML4 and NUDC in mitotic spindle formation"/>
</dbReference>
<dbReference type="PRO" id="PR:Q76I89"/>
<dbReference type="Proteomes" id="UP000000539">
    <property type="component" value="Chromosome 2"/>
</dbReference>
<dbReference type="Bgee" id="ENSGALG00000014801">
    <property type="expression patterns" value="Expressed in ovary and 9 other cell types or tissues"/>
</dbReference>
<dbReference type="GO" id="GO:0005813">
    <property type="term" value="C:centrosome"/>
    <property type="evidence" value="ECO:0007669"/>
    <property type="project" value="Ensembl"/>
</dbReference>
<dbReference type="GO" id="GO:0005829">
    <property type="term" value="C:cytosol"/>
    <property type="evidence" value="ECO:0007669"/>
    <property type="project" value="Ensembl"/>
</dbReference>
<dbReference type="GO" id="GO:0000776">
    <property type="term" value="C:kinetochore"/>
    <property type="evidence" value="ECO:0000250"/>
    <property type="project" value="UniProtKB"/>
</dbReference>
<dbReference type="GO" id="GO:0031262">
    <property type="term" value="C:Ndc80 complex"/>
    <property type="evidence" value="ECO:0000250"/>
    <property type="project" value="UniProtKB"/>
</dbReference>
<dbReference type="GO" id="GO:0016607">
    <property type="term" value="C:nuclear speck"/>
    <property type="evidence" value="ECO:0007669"/>
    <property type="project" value="Ensembl"/>
</dbReference>
<dbReference type="GO" id="GO:0030332">
    <property type="term" value="F:cyclin binding"/>
    <property type="evidence" value="ECO:0007669"/>
    <property type="project" value="Ensembl"/>
</dbReference>
<dbReference type="GO" id="GO:0042802">
    <property type="term" value="F:identical protein binding"/>
    <property type="evidence" value="ECO:0007669"/>
    <property type="project" value="Ensembl"/>
</dbReference>
<dbReference type="GO" id="GO:0140483">
    <property type="term" value="F:kinetochore adaptor activity"/>
    <property type="evidence" value="ECO:0000250"/>
    <property type="project" value="UniProtKB"/>
</dbReference>
<dbReference type="GO" id="GO:0008017">
    <property type="term" value="F:microtubule binding"/>
    <property type="evidence" value="ECO:0000250"/>
    <property type="project" value="UniProtKB"/>
</dbReference>
<dbReference type="GO" id="GO:0051315">
    <property type="term" value="P:attachment of mitotic spindle microtubules to kinetochore"/>
    <property type="evidence" value="ECO:0000250"/>
    <property type="project" value="UniProtKB"/>
</dbReference>
<dbReference type="GO" id="GO:0051301">
    <property type="term" value="P:cell division"/>
    <property type="evidence" value="ECO:0007669"/>
    <property type="project" value="UniProtKB-KW"/>
</dbReference>
<dbReference type="GO" id="GO:0051298">
    <property type="term" value="P:centrosome duplication"/>
    <property type="evidence" value="ECO:0007669"/>
    <property type="project" value="Ensembl"/>
</dbReference>
<dbReference type="GO" id="GO:0007059">
    <property type="term" value="P:chromosome segregation"/>
    <property type="evidence" value="ECO:0000250"/>
    <property type="project" value="UniProtKB"/>
</dbReference>
<dbReference type="GO" id="GO:0000132">
    <property type="term" value="P:establishment of mitotic spindle orientation"/>
    <property type="evidence" value="ECO:0007669"/>
    <property type="project" value="Ensembl"/>
</dbReference>
<dbReference type="GO" id="GO:0008315">
    <property type="term" value="P:G2/MI transition of meiotic cell cycle"/>
    <property type="evidence" value="ECO:0007669"/>
    <property type="project" value="Ensembl"/>
</dbReference>
<dbReference type="GO" id="GO:0051383">
    <property type="term" value="P:kinetochore organization"/>
    <property type="evidence" value="ECO:0007669"/>
    <property type="project" value="Ensembl"/>
</dbReference>
<dbReference type="GO" id="GO:0051310">
    <property type="term" value="P:metaphase chromosome alignment"/>
    <property type="evidence" value="ECO:0000250"/>
    <property type="project" value="UniProtKB"/>
</dbReference>
<dbReference type="GO" id="GO:0007052">
    <property type="term" value="P:mitotic spindle organization"/>
    <property type="evidence" value="ECO:0000250"/>
    <property type="project" value="UniProtKB"/>
</dbReference>
<dbReference type="GO" id="GO:0090267">
    <property type="term" value="P:positive regulation of mitotic cell cycle spindle assembly checkpoint"/>
    <property type="evidence" value="ECO:0000250"/>
    <property type="project" value="UniProtKB"/>
</dbReference>
<dbReference type="GO" id="GO:0031647">
    <property type="term" value="P:regulation of protein stability"/>
    <property type="evidence" value="ECO:0007669"/>
    <property type="project" value="Ensembl"/>
</dbReference>
<dbReference type="GO" id="GO:0014841">
    <property type="term" value="P:skeletal muscle satellite cell proliferation"/>
    <property type="evidence" value="ECO:0007669"/>
    <property type="project" value="Ensembl"/>
</dbReference>
<dbReference type="GO" id="GO:0007057">
    <property type="term" value="P:spindle assembly involved in female meiosis I"/>
    <property type="evidence" value="ECO:0007669"/>
    <property type="project" value="Ensembl"/>
</dbReference>
<dbReference type="FunFam" id="1.10.418.30:FF:000002">
    <property type="entry name" value="NDC80, kinetochore complex component"/>
    <property type="match status" value="1"/>
</dbReference>
<dbReference type="Gene3D" id="6.10.250.1950">
    <property type="match status" value="1"/>
</dbReference>
<dbReference type="Gene3D" id="1.10.418.30">
    <property type="entry name" value="Ncd80 complex, Ncd80 subunit"/>
    <property type="match status" value="1"/>
</dbReference>
<dbReference type="InterPro" id="IPR040967">
    <property type="entry name" value="DUF5595"/>
</dbReference>
<dbReference type="InterPro" id="IPR005550">
    <property type="entry name" value="Kinetochore_Ndc80"/>
</dbReference>
<dbReference type="InterPro" id="IPR055260">
    <property type="entry name" value="Ndc80_CH"/>
</dbReference>
<dbReference type="InterPro" id="IPR038273">
    <property type="entry name" value="Ndc80_sf"/>
</dbReference>
<dbReference type="PANTHER" id="PTHR10643">
    <property type="entry name" value="KINETOCHORE PROTEIN NDC80"/>
    <property type="match status" value="1"/>
</dbReference>
<dbReference type="PANTHER" id="PTHR10643:SF2">
    <property type="entry name" value="KINETOCHORE PROTEIN NDC80 HOMOLOG"/>
    <property type="match status" value="1"/>
</dbReference>
<dbReference type="Pfam" id="PF18077">
    <property type="entry name" value="DUF5595"/>
    <property type="match status" value="1"/>
</dbReference>
<dbReference type="Pfam" id="PF03801">
    <property type="entry name" value="Ndc80_HEC"/>
    <property type="match status" value="1"/>
</dbReference>
<dbReference type="Pfam" id="PF24487">
    <property type="entry name" value="NDC80_loop"/>
    <property type="match status" value="1"/>
</dbReference>
<reference key="1">
    <citation type="journal article" date="2003" name="J. Cell Sci.">
        <title>Dynamic behavior of Nuf2-Hec1 complex that localizes to the centrosome and centromere and is essential for mitotic progression in vertebrate cells.</title>
        <authorList>
            <person name="Hori T."/>
            <person name="Haraguchi T."/>
            <person name="Hiraoka Y."/>
            <person name="Kimura H."/>
            <person name="Fukagawa T."/>
        </authorList>
    </citation>
    <scope>NUCLEOTIDE SEQUENCE [MRNA]</scope>
    <scope>FUNCTION</scope>
    <scope>INTERACTION WITH CDCA1</scope>
    <scope>SUBCELLULAR LOCATION</scope>
</reference>
<reference key="2">
    <citation type="journal article" date="2005" name="Genome Biol.">
        <title>Full-length cDNAs from chicken bursal lymphocytes to facilitate gene function analysis.</title>
        <authorList>
            <person name="Caldwell R.B."/>
            <person name="Kierzek A.M."/>
            <person name="Arakawa H."/>
            <person name="Bezzubov Y."/>
            <person name="Zaim J."/>
            <person name="Fiedler P."/>
            <person name="Kutter S."/>
            <person name="Blagodatski A."/>
            <person name="Kostovska D."/>
            <person name="Koter M."/>
            <person name="Plachy J."/>
            <person name="Carninci P."/>
            <person name="Hayashizaki Y."/>
            <person name="Buerstedde J.-M."/>
        </authorList>
    </citation>
    <scope>NUCLEOTIDE SEQUENCE [LARGE SCALE MRNA]</scope>
    <source>
        <strain>CB</strain>
        <tissue>Bursa of Fabricius</tissue>
    </source>
</reference>
<reference key="3">
    <citation type="journal article" date="2005" name="Mol. Cell. Biol.">
        <title>The functional region of CENP-H interacts with the Nuf2 complex that localizes to centromere during mitosis.</title>
        <authorList>
            <person name="Mikami Y."/>
            <person name="Hori T."/>
            <person name="Kimura H."/>
            <person name="Fukagawa T."/>
        </authorList>
    </citation>
    <scope>INTERACTION WITH CENPH</scope>
    <scope>SUBCELLULAR LOCATION</scope>
</reference>
<reference key="4">
    <citation type="journal article" date="2005" name="Mol. Cell. Biol.">
        <title>CENP-A is required for accurate chromosome segregation and sustained kinetochore association of BubR1.</title>
        <authorList>
            <person name="Regnier V."/>
            <person name="Vagnarelli P."/>
            <person name="Fukagawa T."/>
            <person name="Zerjal T."/>
            <person name="Burns E."/>
            <person name="Trouche D."/>
            <person name="Earnshaw W."/>
            <person name="Brown W."/>
        </authorList>
    </citation>
    <scope>SUBCELLULAR LOCATION</scope>
</reference>
<reference key="5">
    <citation type="journal article" date="2011" name="J. Cell Biol.">
        <title>Spindle microtubules generate tension-dependent changes in the distribution of inner kinetochore proteins.</title>
        <authorList>
            <person name="Suzuki A."/>
            <person name="Hori T."/>
            <person name="Nishino T."/>
            <person name="Usukura J."/>
            <person name="Miyagi A."/>
            <person name="Morikawa K."/>
            <person name="Fukagawa T."/>
        </authorList>
    </citation>
    <scope>SUBCELLULAR LOCATION</scope>
</reference>
<proteinExistence type="evidence at protein level"/>
<evidence type="ECO:0000250" key="1">
    <source>
        <dbReference type="UniProtKB" id="O14777"/>
    </source>
</evidence>
<evidence type="ECO:0000255" key="2"/>
<evidence type="ECO:0000256" key="3">
    <source>
        <dbReference type="SAM" id="MobiDB-lite"/>
    </source>
</evidence>
<evidence type="ECO:0000269" key="4">
    <source>
    </source>
</evidence>
<evidence type="ECO:0000269" key="5">
    <source>
    </source>
</evidence>
<evidence type="ECO:0000305" key="6"/>
<sequence>MRRSSTTSGSSGRQSTMVLRVQDSNKMGLQTPQTKDRGTFGKLSMSKTTSATSERKVSFFGKRASGAGGSRNSQYGMFGTEKIKDPRPLHDKAFIQQCIKQLCEFLVENGYAHNVTIKSLQSPSVKDFIKIFTFIYGFLCPSYELPDSKFEEEIPRVFKELGYPFPLSKSSMYTVGAPHTWPQIVAALIWLTDCFKLYAAMRENPSSFDDGQNWGGETDDGIVHNKLFMDYVVKCYEHFMKGGDTYEELDAEVQSKLKDLFNVDEFKIEGLAAENKRLHEEIARLEKERESEPDRLVSLRKLRSSFQADVQKYQAYLANLESHTTILDQKMKSVNEEVETTEMEVEAMKQENARLQHIFDNQKYSVADIERINHERNELQQTINKLTKELEAEEHQLWNEELKYARNKEAIETQLAEYHKLARKLKLIPISAENSKGHDFEIHFNPEAGPNCLVKYRTQIKAPLMEIVNQTEEEIRKATQRKMSLEDTLEQVNAMVAEKKSSVKTLKEEAEKLDDLYHQKLKEAEEEEQKCANELELLEKHKQLLESGVNEGLSEATNELHDIQRQYQIVMQTTTEESRKAGDNLNRLLEVITTHVVSIEKYLDEQNSKIDRDYEEFMSEDLLSTLTGILDSYKKKAESI</sequence>
<gene>
    <name type="primary">NDC80</name>
    <name type="synonym">HEC1</name>
    <name type="synonym">KNTC2</name>
    <name type="ORF">RCJMB04_4o15</name>
</gene>